<keyword id="KW-0963">Cytoplasm</keyword>
<keyword id="KW-0694">RNA-binding</keyword>
<feature type="chain" id="PRO_1000002057" description="SsrA-binding protein">
    <location>
        <begin position="1"/>
        <end position="157"/>
    </location>
</feature>
<feature type="region of interest" description="Disordered" evidence="2">
    <location>
        <begin position="132"/>
        <end position="157"/>
    </location>
</feature>
<feature type="compositionally biased region" description="Basic and acidic residues" evidence="2">
    <location>
        <begin position="135"/>
        <end position="157"/>
    </location>
</feature>
<evidence type="ECO:0000255" key="1">
    <source>
        <dbReference type="HAMAP-Rule" id="MF_00023"/>
    </source>
</evidence>
<evidence type="ECO:0000256" key="2">
    <source>
        <dbReference type="SAM" id="MobiDB-lite"/>
    </source>
</evidence>
<proteinExistence type="inferred from homology"/>
<sequence length="157" mass="17954">MSKHKVSPATIAKNKKALHDYTILEKFEAGIVLQGWEVKSIRAGKVQMVDSHVHIKHGEAWLFNCLITPLLSASTHVVADAAATRKLLLNRREINKIMGRIEQKGFTCIPLSMYWKGPRVKVEIALAQGKKVHDKRQAQKDKDWAREKDRLFKKAYK</sequence>
<comment type="function">
    <text evidence="1">Required for rescue of stalled ribosomes mediated by trans-translation. Binds to transfer-messenger RNA (tmRNA), required for stable association of tmRNA with ribosomes. tmRNA and SmpB together mimic tRNA shape, replacing the anticodon stem-loop with SmpB. tmRNA is encoded by the ssrA gene; the 2 termini fold to resemble tRNA(Ala) and it encodes a 'tag peptide', a short internal open reading frame. During trans-translation Ala-aminoacylated tmRNA acts like a tRNA, entering the A-site of stalled ribosomes, displacing the stalled mRNA. The ribosome then switches to translate the ORF on the tmRNA; the nascent peptide is terminated with the 'tag peptide' encoded by the tmRNA and targeted for degradation. The ribosome is freed to recommence translation, which seems to be the essential function of trans-translation.</text>
</comment>
<comment type="subcellular location">
    <subcellularLocation>
        <location evidence="1">Cytoplasm</location>
    </subcellularLocation>
    <text evidence="1">The tmRNA-SmpB complex associates with stalled 70S ribosomes.</text>
</comment>
<comment type="similarity">
    <text evidence="1">Belongs to the SmpB family.</text>
</comment>
<accession>Q14H46</accession>
<gene>
    <name evidence="1" type="primary">smpB</name>
    <name type="ordered locus">FTF1186</name>
</gene>
<name>SSRP_FRAT1</name>
<reference key="1">
    <citation type="journal article" date="2007" name="PLoS ONE">
        <title>Genome sequencing shows that European isolates of Francisella tularensis subspecies tularensis are almost identical to US laboratory strain Schu S4.</title>
        <authorList>
            <person name="Chaudhuri R.R."/>
            <person name="Ren C.-P."/>
            <person name="Desmond L."/>
            <person name="Vincent G.A."/>
            <person name="Silman N.J."/>
            <person name="Brehm J.K."/>
            <person name="Elmore M.J."/>
            <person name="Hudson M.J."/>
            <person name="Forsman M."/>
            <person name="Isherwood K.E."/>
            <person name="Gurycova D."/>
            <person name="Minton N.P."/>
            <person name="Titball R.W."/>
            <person name="Pallen M.J."/>
            <person name="Vipond R."/>
        </authorList>
    </citation>
    <scope>NUCLEOTIDE SEQUENCE [LARGE SCALE GENOMIC DNA]</scope>
    <source>
        <strain>FSC 198</strain>
    </source>
</reference>
<organism>
    <name type="scientific">Francisella tularensis subsp. tularensis (strain FSC 198)</name>
    <dbReference type="NCBI Taxonomy" id="393115"/>
    <lineage>
        <taxon>Bacteria</taxon>
        <taxon>Pseudomonadati</taxon>
        <taxon>Pseudomonadota</taxon>
        <taxon>Gammaproteobacteria</taxon>
        <taxon>Thiotrichales</taxon>
        <taxon>Francisellaceae</taxon>
        <taxon>Francisella</taxon>
    </lineage>
</organism>
<protein>
    <recommendedName>
        <fullName evidence="1">SsrA-binding protein</fullName>
    </recommendedName>
    <alternativeName>
        <fullName evidence="1">Small protein B</fullName>
    </alternativeName>
</protein>
<dbReference type="EMBL" id="AM286280">
    <property type="protein sequence ID" value="CAL09202.1"/>
    <property type="molecule type" value="Genomic_DNA"/>
</dbReference>
<dbReference type="RefSeq" id="WP_003015283.1">
    <property type="nucleotide sequence ID" value="NC_008245.1"/>
</dbReference>
<dbReference type="SMR" id="Q14H46"/>
<dbReference type="KEGG" id="ftf:FTF1186"/>
<dbReference type="HOGENOM" id="CLU_108953_3_0_6"/>
<dbReference type="GO" id="GO:0005829">
    <property type="term" value="C:cytosol"/>
    <property type="evidence" value="ECO:0007669"/>
    <property type="project" value="TreeGrafter"/>
</dbReference>
<dbReference type="GO" id="GO:0003723">
    <property type="term" value="F:RNA binding"/>
    <property type="evidence" value="ECO:0007669"/>
    <property type="project" value="UniProtKB-UniRule"/>
</dbReference>
<dbReference type="GO" id="GO:0070929">
    <property type="term" value="P:trans-translation"/>
    <property type="evidence" value="ECO:0007669"/>
    <property type="project" value="UniProtKB-UniRule"/>
</dbReference>
<dbReference type="CDD" id="cd09294">
    <property type="entry name" value="SmpB"/>
    <property type="match status" value="1"/>
</dbReference>
<dbReference type="Gene3D" id="2.40.280.10">
    <property type="match status" value="1"/>
</dbReference>
<dbReference type="HAMAP" id="MF_00023">
    <property type="entry name" value="SmpB"/>
    <property type="match status" value="1"/>
</dbReference>
<dbReference type="InterPro" id="IPR023620">
    <property type="entry name" value="SmpB"/>
</dbReference>
<dbReference type="InterPro" id="IPR000037">
    <property type="entry name" value="SsrA-bd_prot"/>
</dbReference>
<dbReference type="InterPro" id="IPR020081">
    <property type="entry name" value="SsrA-bd_prot_CS"/>
</dbReference>
<dbReference type="NCBIfam" id="NF003843">
    <property type="entry name" value="PRK05422.1"/>
    <property type="match status" value="1"/>
</dbReference>
<dbReference type="NCBIfam" id="TIGR00086">
    <property type="entry name" value="smpB"/>
    <property type="match status" value="1"/>
</dbReference>
<dbReference type="PANTHER" id="PTHR30308:SF2">
    <property type="entry name" value="SSRA-BINDING PROTEIN"/>
    <property type="match status" value="1"/>
</dbReference>
<dbReference type="PANTHER" id="PTHR30308">
    <property type="entry name" value="TMRNA-BINDING COMPONENT OF TRANS-TRANSLATION TAGGING COMPLEX"/>
    <property type="match status" value="1"/>
</dbReference>
<dbReference type="Pfam" id="PF01668">
    <property type="entry name" value="SmpB"/>
    <property type="match status" value="1"/>
</dbReference>
<dbReference type="SUPFAM" id="SSF74982">
    <property type="entry name" value="Small protein B (SmpB)"/>
    <property type="match status" value="1"/>
</dbReference>
<dbReference type="PROSITE" id="PS01317">
    <property type="entry name" value="SSRP"/>
    <property type="match status" value="1"/>
</dbReference>